<reference key="1">
    <citation type="journal article" date="2006" name="J. Bacteriol.">
        <title>The genome sequence of the obligately chemolithoautotrophic, facultatively anaerobic bacterium Thiobacillus denitrificans.</title>
        <authorList>
            <person name="Beller H.R."/>
            <person name="Chain P.S."/>
            <person name="Letain T.E."/>
            <person name="Chakicherla A."/>
            <person name="Larimer F.W."/>
            <person name="Richardson P.M."/>
            <person name="Coleman M.A."/>
            <person name="Wood A.P."/>
            <person name="Kelly D.P."/>
        </authorList>
    </citation>
    <scope>NUCLEOTIDE SEQUENCE [LARGE SCALE GENOMIC DNA]</scope>
    <source>
        <strain>ATCC 25259 / T1</strain>
    </source>
</reference>
<dbReference type="EC" id="6.3.4.20" evidence="1"/>
<dbReference type="EMBL" id="CP000116">
    <property type="protein sequence ID" value="AAZ98155.1"/>
    <property type="molecule type" value="Genomic_DNA"/>
</dbReference>
<dbReference type="RefSeq" id="WP_011312714.1">
    <property type="nucleotide sequence ID" value="NC_007404.1"/>
</dbReference>
<dbReference type="SMR" id="Q3SGT8"/>
<dbReference type="STRING" id="292415.Tbd_2202"/>
<dbReference type="KEGG" id="tbd:Tbd_2202"/>
<dbReference type="eggNOG" id="COG0603">
    <property type="taxonomic scope" value="Bacteria"/>
</dbReference>
<dbReference type="HOGENOM" id="CLU_081854_1_1_4"/>
<dbReference type="OrthoDB" id="9789567at2"/>
<dbReference type="UniPathway" id="UPA00391"/>
<dbReference type="Proteomes" id="UP000008291">
    <property type="component" value="Chromosome"/>
</dbReference>
<dbReference type="GO" id="GO:0005524">
    <property type="term" value="F:ATP binding"/>
    <property type="evidence" value="ECO:0007669"/>
    <property type="project" value="UniProtKB-UniRule"/>
</dbReference>
<dbReference type="GO" id="GO:0016879">
    <property type="term" value="F:ligase activity, forming carbon-nitrogen bonds"/>
    <property type="evidence" value="ECO:0007669"/>
    <property type="project" value="UniProtKB-UniRule"/>
</dbReference>
<dbReference type="GO" id="GO:0008270">
    <property type="term" value="F:zinc ion binding"/>
    <property type="evidence" value="ECO:0007669"/>
    <property type="project" value="UniProtKB-UniRule"/>
</dbReference>
<dbReference type="GO" id="GO:0008616">
    <property type="term" value="P:queuosine biosynthetic process"/>
    <property type="evidence" value="ECO:0007669"/>
    <property type="project" value="UniProtKB-UniRule"/>
</dbReference>
<dbReference type="CDD" id="cd01995">
    <property type="entry name" value="QueC-like"/>
    <property type="match status" value="1"/>
</dbReference>
<dbReference type="FunFam" id="3.40.50.620:FF:000131">
    <property type="entry name" value="7-cyano-7-deazaguanine synthase"/>
    <property type="match status" value="1"/>
</dbReference>
<dbReference type="Gene3D" id="3.40.50.620">
    <property type="entry name" value="HUPs"/>
    <property type="match status" value="1"/>
</dbReference>
<dbReference type="HAMAP" id="MF_01633">
    <property type="entry name" value="QueC"/>
    <property type="match status" value="1"/>
</dbReference>
<dbReference type="InterPro" id="IPR018317">
    <property type="entry name" value="QueC"/>
</dbReference>
<dbReference type="InterPro" id="IPR014729">
    <property type="entry name" value="Rossmann-like_a/b/a_fold"/>
</dbReference>
<dbReference type="NCBIfam" id="TIGR00364">
    <property type="entry name" value="7-cyano-7-deazaguanine synthase QueC"/>
    <property type="match status" value="1"/>
</dbReference>
<dbReference type="PANTHER" id="PTHR42914">
    <property type="entry name" value="7-CYANO-7-DEAZAGUANINE SYNTHASE"/>
    <property type="match status" value="1"/>
</dbReference>
<dbReference type="PANTHER" id="PTHR42914:SF1">
    <property type="entry name" value="7-CYANO-7-DEAZAGUANINE SYNTHASE"/>
    <property type="match status" value="1"/>
</dbReference>
<dbReference type="Pfam" id="PF06508">
    <property type="entry name" value="QueC"/>
    <property type="match status" value="1"/>
</dbReference>
<dbReference type="PIRSF" id="PIRSF006293">
    <property type="entry name" value="ExsB"/>
    <property type="match status" value="1"/>
</dbReference>
<dbReference type="SUPFAM" id="SSF52402">
    <property type="entry name" value="Adenine nucleotide alpha hydrolases-like"/>
    <property type="match status" value="1"/>
</dbReference>
<protein>
    <recommendedName>
        <fullName evidence="1">7-cyano-7-deazaguanine synthase</fullName>
        <ecNumber evidence="1">6.3.4.20</ecNumber>
    </recommendedName>
    <alternativeName>
        <fullName evidence="1">7-cyano-7-carbaguanine synthase</fullName>
    </alternativeName>
    <alternativeName>
        <fullName evidence="1">PreQ(0) synthase</fullName>
    </alternativeName>
    <alternativeName>
        <fullName evidence="1">Queuosine biosynthesis protein QueC</fullName>
    </alternativeName>
</protein>
<gene>
    <name evidence="1" type="primary">queC</name>
    <name type="ordered locus">Tbd_2202</name>
</gene>
<sequence>MKPCAIVLLSGGLDSATALAMAREAGFACHALSLDYGQRHTAELAAAARLAAQLGAVEHRVIRLGLGDFGGSALTDASIAVPESPVAGIPVTYVPARNTVMLALALAWAEVLGARDIFIGVNAVDYSGYPDCRPEFIEAFERMANLATKAGVEGAQLRIHAPLQHLSKAEIIHRGTALGVDYAQTVSCYQADAEGRACGRCDACRLRREGFLAAGLADPTRYAR</sequence>
<feature type="chain" id="PRO_0000246952" description="7-cyano-7-deazaguanine synthase">
    <location>
        <begin position="1"/>
        <end position="224"/>
    </location>
</feature>
<feature type="binding site" evidence="1">
    <location>
        <begin position="9"/>
        <end position="19"/>
    </location>
    <ligand>
        <name>ATP</name>
        <dbReference type="ChEBI" id="CHEBI:30616"/>
    </ligand>
</feature>
<feature type="binding site" evidence="1">
    <location>
        <position position="188"/>
    </location>
    <ligand>
        <name>Zn(2+)</name>
        <dbReference type="ChEBI" id="CHEBI:29105"/>
    </ligand>
</feature>
<feature type="binding site" evidence="1">
    <location>
        <position position="198"/>
    </location>
    <ligand>
        <name>Zn(2+)</name>
        <dbReference type="ChEBI" id="CHEBI:29105"/>
    </ligand>
</feature>
<feature type="binding site" evidence="1">
    <location>
        <position position="201"/>
    </location>
    <ligand>
        <name>Zn(2+)</name>
        <dbReference type="ChEBI" id="CHEBI:29105"/>
    </ligand>
</feature>
<feature type="binding site" evidence="1">
    <location>
        <position position="204"/>
    </location>
    <ligand>
        <name>Zn(2+)</name>
        <dbReference type="ChEBI" id="CHEBI:29105"/>
    </ligand>
</feature>
<name>QUEC_THIDA</name>
<accession>Q3SGT8</accession>
<proteinExistence type="inferred from homology"/>
<comment type="function">
    <text evidence="1">Catalyzes the ATP-dependent conversion of 7-carboxy-7-deazaguanine (CDG) to 7-cyano-7-deazaguanine (preQ(0)).</text>
</comment>
<comment type="catalytic activity">
    <reaction evidence="1">
        <text>7-carboxy-7-deazaguanine + NH4(+) + ATP = 7-cyano-7-deazaguanine + ADP + phosphate + H2O + H(+)</text>
        <dbReference type="Rhea" id="RHEA:27982"/>
        <dbReference type="ChEBI" id="CHEBI:15377"/>
        <dbReference type="ChEBI" id="CHEBI:15378"/>
        <dbReference type="ChEBI" id="CHEBI:28938"/>
        <dbReference type="ChEBI" id="CHEBI:30616"/>
        <dbReference type="ChEBI" id="CHEBI:43474"/>
        <dbReference type="ChEBI" id="CHEBI:45075"/>
        <dbReference type="ChEBI" id="CHEBI:61036"/>
        <dbReference type="ChEBI" id="CHEBI:456216"/>
        <dbReference type="EC" id="6.3.4.20"/>
    </reaction>
</comment>
<comment type="cofactor">
    <cofactor evidence="1">
        <name>Zn(2+)</name>
        <dbReference type="ChEBI" id="CHEBI:29105"/>
    </cofactor>
    <text evidence="1">Binds 1 zinc ion per subunit.</text>
</comment>
<comment type="pathway">
    <text evidence="1">Purine metabolism; 7-cyano-7-deazaguanine biosynthesis.</text>
</comment>
<comment type="similarity">
    <text evidence="1">Belongs to the QueC family.</text>
</comment>
<keyword id="KW-0067">ATP-binding</keyword>
<keyword id="KW-0436">Ligase</keyword>
<keyword id="KW-0479">Metal-binding</keyword>
<keyword id="KW-0547">Nucleotide-binding</keyword>
<keyword id="KW-0671">Queuosine biosynthesis</keyword>
<keyword id="KW-1185">Reference proteome</keyword>
<keyword id="KW-0862">Zinc</keyword>
<organism>
    <name type="scientific">Thiobacillus denitrificans (strain ATCC 25259 / T1)</name>
    <dbReference type="NCBI Taxonomy" id="292415"/>
    <lineage>
        <taxon>Bacteria</taxon>
        <taxon>Pseudomonadati</taxon>
        <taxon>Pseudomonadota</taxon>
        <taxon>Betaproteobacteria</taxon>
        <taxon>Nitrosomonadales</taxon>
        <taxon>Thiobacillaceae</taxon>
        <taxon>Thiobacillus</taxon>
    </lineage>
</organism>
<evidence type="ECO:0000255" key="1">
    <source>
        <dbReference type="HAMAP-Rule" id="MF_01633"/>
    </source>
</evidence>